<comment type="function">
    <text evidence="3">May have antimicrobial properties, like most ant linear peptides.</text>
</comment>
<comment type="subcellular location">
    <subcellularLocation>
        <location evidence="1">Secreted</location>
    </subcellularLocation>
</comment>
<comment type="tissue specificity">
    <text evidence="4">Expressed by the venom gland.</text>
</comment>
<comment type="mass spectrometry"/>
<comment type="similarity">
    <text evidence="3">Belongs to the formicidae venom precursor-01 superfamily.</text>
</comment>
<comment type="online information" name="National Center for Biotechnology Information (NCBI)">
    <link uri="https://www.ncbi.nlm.nih.gov/nuccore/GGFG01000003"/>
</comment>
<evidence type="ECO:0000269" key="1">
    <source>
    </source>
</evidence>
<evidence type="ECO:0000303" key="2">
    <source>
    </source>
</evidence>
<evidence type="ECO:0000305" key="3"/>
<evidence type="ECO:0000305" key="4">
    <source>
    </source>
</evidence>
<organism>
    <name type="scientific">Myrmecia gulosa</name>
    <name type="common">Red bulldog ant</name>
    <dbReference type="NCBI Taxonomy" id="36170"/>
    <lineage>
        <taxon>Eukaryota</taxon>
        <taxon>Metazoa</taxon>
        <taxon>Ecdysozoa</taxon>
        <taxon>Arthropoda</taxon>
        <taxon>Hexapoda</taxon>
        <taxon>Insecta</taxon>
        <taxon>Pterygota</taxon>
        <taxon>Neoptera</taxon>
        <taxon>Endopterygota</taxon>
        <taxon>Hymenoptera</taxon>
        <taxon>Apocrita</taxon>
        <taxon>Aculeata</taxon>
        <taxon>Formicoidea</taxon>
        <taxon>Formicidae</taxon>
        <taxon>Myrmeciinae</taxon>
        <taxon>Myrmeciini</taxon>
        <taxon>Myrmecia</taxon>
    </lineage>
</organism>
<proteinExistence type="evidence at protein level"/>
<accession>P0DSJ6</accession>
<name>TX13A_MYRGU</name>
<keyword id="KW-0929">Antimicrobial</keyword>
<keyword id="KW-0964">Secreted</keyword>
<keyword id="KW-0732">Signal</keyword>
<reference key="1">
    <citation type="journal article" date="2018" name="Sci. Adv.">
        <title>A comprehensive portrait of the venom of the giant red bull ant, Myrmecia gulosa, reveals a hyperdiverse hymenopteran toxin gene family.</title>
        <authorList>
            <person name="Robinson S.D."/>
            <person name="Mueller A."/>
            <person name="Clayton D."/>
            <person name="Starobova H."/>
            <person name="Hamilton B.R."/>
            <person name="Payne R.J."/>
            <person name="Vetter I."/>
            <person name="King G.F."/>
            <person name="Undheim E.A.B."/>
        </authorList>
    </citation>
    <scope>NUCLEOTIDE SEQUENCE [MRNA]</scope>
    <scope>SUBCELLULAR LOCATION</scope>
    <scope>MASS SPECTROMETRY</scope>
    <source>
        <tissue>Venom</tissue>
        <tissue>Venom gland</tissue>
    </source>
</reference>
<sequence>MKTTVILLLAIAIIFAIMTTLTSAKNEETMEEALKGLNELKERLKKQGIDTAALNLDEKLLT</sequence>
<protein>
    <recommendedName>
        <fullName evidence="3">U-myrmeciitoxin(01)-Mg3a</fullName>
        <shortName evidence="2">MIITX(01)-Mg3a</shortName>
        <shortName evidence="3">U-MIITX(01)-Mg3a</shortName>
    </recommendedName>
</protein>
<feature type="signal peptide" evidence="1">
    <location>
        <begin position="1"/>
        <end position="24"/>
    </location>
</feature>
<feature type="chain" id="PRO_0000447070" description="U-myrmeciitoxin(01)-Mg3a" evidence="1">
    <location>
        <begin position="25"/>
        <end position="62"/>
    </location>
</feature>
<dbReference type="SMR" id="P0DSJ6"/>
<dbReference type="GO" id="GO:0005576">
    <property type="term" value="C:extracellular region"/>
    <property type="evidence" value="ECO:0007669"/>
    <property type="project" value="UniProtKB-SubCell"/>
</dbReference>